<protein>
    <recommendedName>
        <fullName evidence="1">SsrA-binding protein</fullName>
    </recommendedName>
    <alternativeName>
        <fullName evidence="1">Small protein B</fullName>
    </alternativeName>
</protein>
<feature type="chain" id="PRO_0000102913" description="SsrA-binding protein">
    <location>
        <begin position="1"/>
        <end position="150"/>
    </location>
</feature>
<proteinExistence type="inferred from homology"/>
<keyword id="KW-0963">Cytoplasm</keyword>
<keyword id="KW-1185">Reference proteome</keyword>
<keyword id="KW-0694">RNA-binding</keyword>
<name>SSRP_BORBU</name>
<comment type="function">
    <text evidence="1">Required for rescue of stalled ribosomes mediated by trans-translation. Binds to transfer-messenger RNA (tmRNA), required for stable association of tmRNA with ribosomes. tmRNA and SmpB together mimic tRNA shape, replacing the anticodon stem-loop with SmpB. tmRNA is encoded by the ssrA gene; the 2 termini fold to resemble tRNA(Ala) and it encodes a 'tag peptide', a short internal open reading frame. During trans-translation Ala-aminoacylated tmRNA acts like a tRNA, entering the A-site of stalled ribosomes, displacing the stalled mRNA. The ribosome then switches to translate the ORF on the tmRNA; the nascent peptide is terminated with the 'tag peptide' encoded by the tmRNA and targeted for degradation. The ribosome is freed to recommence translation, which seems to be the essential function of trans-translation.</text>
</comment>
<comment type="subcellular location">
    <subcellularLocation>
        <location evidence="1">Cytoplasm</location>
    </subcellularLocation>
    <text evidence="1">The tmRNA-SmpB complex associates with stalled 70S ribosomes.</text>
</comment>
<comment type="similarity">
    <text evidence="1">Belongs to the SmpB family.</text>
</comment>
<reference key="1">
    <citation type="journal article" date="1997" name="Nature">
        <title>Genomic sequence of a Lyme disease spirochaete, Borrelia burgdorferi.</title>
        <authorList>
            <person name="Fraser C.M."/>
            <person name="Casjens S."/>
            <person name="Huang W.M."/>
            <person name="Sutton G.G."/>
            <person name="Clayton R.A."/>
            <person name="Lathigra R."/>
            <person name="White O."/>
            <person name="Ketchum K.A."/>
            <person name="Dodson R.J."/>
            <person name="Hickey E.K."/>
            <person name="Gwinn M.L."/>
            <person name="Dougherty B.A."/>
            <person name="Tomb J.-F."/>
            <person name="Fleischmann R.D."/>
            <person name="Richardson D.L."/>
            <person name="Peterson J.D."/>
            <person name="Kerlavage A.R."/>
            <person name="Quackenbush J."/>
            <person name="Salzberg S.L."/>
            <person name="Hanson M."/>
            <person name="van Vugt R."/>
            <person name="Palmer N."/>
            <person name="Adams M.D."/>
            <person name="Gocayne J.D."/>
            <person name="Weidman J.F."/>
            <person name="Utterback T.R."/>
            <person name="Watthey L."/>
            <person name="McDonald L.A."/>
            <person name="Artiach P."/>
            <person name="Bowman C."/>
            <person name="Garland S.A."/>
            <person name="Fujii C."/>
            <person name="Cotton M.D."/>
            <person name="Horst K."/>
            <person name="Roberts K.M."/>
            <person name="Hatch B."/>
            <person name="Smith H.O."/>
            <person name="Venter J.C."/>
        </authorList>
    </citation>
    <scope>NUCLEOTIDE SEQUENCE [LARGE SCALE GENOMIC DNA]</scope>
    <source>
        <strain>ATCC 35210 / DSM 4680 / CIP 102532 / B31</strain>
    </source>
</reference>
<evidence type="ECO:0000255" key="1">
    <source>
        <dbReference type="HAMAP-Rule" id="MF_00023"/>
    </source>
</evidence>
<accession>O51064</accession>
<organism>
    <name type="scientific">Borreliella burgdorferi (strain ATCC 35210 / DSM 4680 / CIP 102532 / B31)</name>
    <name type="common">Borrelia burgdorferi</name>
    <dbReference type="NCBI Taxonomy" id="224326"/>
    <lineage>
        <taxon>Bacteria</taxon>
        <taxon>Pseudomonadati</taxon>
        <taxon>Spirochaetota</taxon>
        <taxon>Spirochaetia</taxon>
        <taxon>Spirochaetales</taxon>
        <taxon>Borreliaceae</taxon>
        <taxon>Borreliella</taxon>
    </lineage>
</organism>
<sequence length="150" mass="17825">MNTNNLLLENKKAKFNYFIEEKISCGIVLKGTEVKSIKAKKLSFNNSFASIKKEELWLENLHVSKYKEGNIFNHDELRPRKLLIKKRELQRLKKFKEKEGYTLIPISFYLKKSIIKVEVGICKGKKLYDKREILKQKSIKKDLSREIKYK</sequence>
<gene>
    <name evidence="1" type="primary">smpB</name>
    <name type="ordered locus">BB_0033</name>
</gene>
<dbReference type="EMBL" id="AE000783">
    <property type="protein sequence ID" value="AAC66420.1"/>
    <property type="molecule type" value="Genomic_DNA"/>
</dbReference>
<dbReference type="PIR" id="A70104">
    <property type="entry name" value="A70104"/>
</dbReference>
<dbReference type="RefSeq" id="NP_212167.1">
    <property type="nucleotide sequence ID" value="NC_001318.1"/>
</dbReference>
<dbReference type="RefSeq" id="WP_002556639.1">
    <property type="nucleotide sequence ID" value="NC_001318.1"/>
</dbReference>
<dbReference type="SMR" id="O51064"/>
<dbReference type="STRING" id="224326.BB_0033"/>
<dbReference type="PaxDb" id="224326-BB_0033"/>
<dbReference type="EnsemblBacteria" id="AAC66420">
    <property type="protein sequence ID" value="AAC66420"/>
    <property type="gene ID" value="BB_0033"/>
</dbReference>
<dbReference type="GeneID" id="56568182"/>
<dbReference type="KEGG" id="bbu:BB_0033"/>
<dbReference type="PATRIC" id="fig|224326.49.peg.432"/>
<dbReference type="HOGENOM" id="CLU_108953_0_0_12"/>
<dbReference type="OrthoDB" id="9805462at2"/>
<dbReference type="Proteomes" id="UP000001807">
    <property type="component" value="Chromosome"/>
</dbReference>
<dbReference type="GO" id="GO:0005829">
    <property type="term" value="C:cytosol"/>
    <property type="evidence" value="ECO:0007669"/>
    <property type="project" value="TreeGrafter"/>
</dbReference>
<dbReference type="GO" id="GO:0003723">
    <property type="term" value="F:RNA binding"/>
    <property type="evidence" value="ECO:0007669"/>
    <property type="project" value="UniProtKB-UniRule"/>
</dbReference>
<dbReference type="GO" id="GO:0070929">
    <property type="term" value="P:trans-translation"/>
    <property type="evidence" value="ECO:0007669"/>
    <property type="project" value="UniProtKB-UniRule"/>
</dbReference>
<dbReference type="CDD" id="cd09294">
    <property type="entry name" value="SmpB"/>
    <property type="match status" value="1"/>
</dbReference>
<dbReference type="Gene3D" id="2.40.280.10">
    <property type="match status" value="1"/>
</dbReference>
<dbReference type="HAMAP" id="MF_00023">
    <property type="entry name" value="SmpB"/>
    <property type="match status" value="1"/>
</dbReference>
<dbReference type="InterPro" id="IPR023620">
    <property type="entry name" value="SmpB"/>
</dbReference>
<dbReference type="InterPro" id="IPR000037">
    <property type="entry name" value="SsrA-bd_prot"/>
</dbReference>
<dbReference type="InterPro" id="IPR020081">
    <property type="entry name" value="SsrA-bd_prot_CS"/>
</dbReference>
<dbReference type="NCBIfam" id="NF003843">
    <property type="entry name" value="PRK05422.1"/>
    <property type="match status" value="1"/>
</dbReference>
<dbReference type="NCBIfam" id="TIGR00086">
    <property type="entry name" value="smpB"/>
    <property type="match status" value="1"/>
</dbReference>
<dbReference type="PANTHER" id="PTHR30308:SF2">
    <property type="entry name" value="SSRA-BINDING PROTEIN"/>
    <property type="match status" value="1"/>
</dbReference>
<dbReference type="PANTHER" id="PTHR30308">
    <property type="entry name" value="TMRNA-BINDING COMPONENT OF TRANS-TRANSLATION TAGGING COMPLEX"/>
    <property type="match status" value="1"/>
</dbReference>
<dbReference type="Pfam" id="PF01668">
    <property type="entry name" value="SmpB"/>
    <property type="match status" value="1"/>
</dbReference>
<dbReference type="SUPFAM" id="SSF74982">
    <property type="entry name" value="Small protein B (SmpB)"/>
    <property type="match status" value="1"/>
</dbReference>
<dbReference type="PROSITE" id="PS01317">
    <property type="entry name" value="SSRP"/>
    <property type="match status" value="1"/>
</dbReference>